<dbReference type="EMBL" id="CP000243">
    <property type="protein sequence ID" value="ABE05571.1"/>
    <property type="molecule type" value="Genomic_DNA"/>
</dbReference>
<dbReference type="RefSeq" id="WP_000746170.1">
    <property type="nucleotide sequence ID" value="NZ_CP064825.1"/>
</dbReference>
<dbReference type="SMR" id="Q1RGE3"/>
<dbReference type="KEGG" id="eci:UTI89_C0061"/>
<dbReference type="HOGENOM" id="CLU_009039_2_0_6"/>
<dbReference type="Proteomes" id="UP000001952">
    <property type="component" value="Chromosome"/>
</dbReference>
<dbReference type="GO" id="GO:0009279">
    <property type="term" value="C:cell outer membrane"/>
    <property type="evidence" value="ECO:0007669"/>
    <property type="project" value="UniProtKB-SubCell"/>
</dbReference>
<dbReference type="GO" id="GO:1990351">
    <property type="term" value="C:transporter complex"/>
    <property type="evidence" value="ECO:0007669"/>
    <property type="project" value="TreeGrafter"/>
</dbReference>
<dbReference type="GO" id="GO:0043165">
    <property type="term" value="P:Gram-negative-bacterium-type cell outer membrane assembly"/>
    <property type="evidence" value="ECO:0007669"/>
    <property type="project" value="UniProtKB-UniRule"/>
</dbReference>
<dbReference type="GO" id="GO:0015920">
    <property type="term" value="P:lipopolysaccharide transport"/>
    <property type="evidence" value="ECO:0007669"/>
    <property type="project" value="InterPro"/>
</dbReference>
<dbReference type="FunFam" id="2.60.450.10:FF:000003">
    <property type="entry name" value="LPS-assembly protein LptD"/>
    <property type="match status" value="1"/>
</dbReference>
<dbReference type="Gene3D" id="2.60.450.10">
    <property type="entry name" value="Lipopolysaccharide (LPS) transport protein A like domain"/>
    <property type="match status" value="1"/>
</dbReference>
<dbReference type="HAMAP" id="MF_01411">
    <property type="entry name" value="LPS_assembly_LptD"/>
    <property type="match status" value="1"/>
</dbReference>
<dbReference type="InterPro" id="IPR020889">
    <property type="entry name" value="LipoPS_assembly_LptD"/>
</dbReference>
<dbReference type="InterPro" id="IPR050218">
    <property type="entry name" value="LptD"/>
</dbReference>
<dbReference type="InterPro" id="IPR007543">
    <property type="entry name" value="LptD_C"/>
</dbReference>
<dbReference type="InterPro" id="IPR005653">
    <property type="entry name" value="OstA-like_N"/>
</dbReference>
<dbReference type="NCBIfam" id="NF002997">
    <property type="entry name" value="PRK03761.1"/>
    <property type="match status" value="1"/>
</dbReference>
<dbReference type="PANTHER" id="PTHR30189">
    <property type="entry name" value="LPS-ASSEMBLY PROTEIN"/>
    <property type="match status" value="1"/>
</dbReference>
<dbReference type="PANTHER" id="PTHR30189:SF1">
    <property type="entry name" value="LPS-ASSEMBLY PROTEIN LPTD"/>
    <property type="match status" value="1"/>
</dbReference>
<dbReference type="Pfam" id="PF04453">
    <property type="entry name" value="LptD"/>
    <property type="match status" value="1"/>
</dbReference>
<dbReference type="Pfam" id="PF03968">
    <property type="entry name" value="LptD_N"/>
    <property type="match status" value="1"/>
</dbReference>
<gene>
    <name evidence="1" type="primary">lptD</name>
    <name type="synonym">imp</name>
    <name type="synonym">ostA</name>
    <name type="ordered locus">UTI89_C0061</name>
</gene>
<feature type="signal peptide" evidence="1">
    <location>
        <begin position="1"/>
        <end position="24"/>
    </location>
</feature>
<feature type="chain" id="PRO_0000281601" description="LPS-assembly protein LptD">
    <location>
        <begin position="25"/>
        <end position="784"/>
    </location>
</feature>
<feature type="disulfide bond" evidence="1">
    <location>
        <begin position="31"/>
        <end position="724"/>
    </location>
</feature>
<feature type="disulfide bond" evidence="1">
    <location>
        <begin position="173"/>
        <end position="725"/>
    </location>
</feature>
<protein>
    <recommendedName>
        <fullName evidence="1">LPS-assembly protein LptD</fullName>
    </recommendedName>
</protein>
<reference key="1">
    <citation type="journal article" date="2006" name="Proc. Natl. Acad. Sci. U.S.A.">
        <title>Identification of genes subject to positive selection in uropathogenic strains of Escherichia coli: a comparative genomics approach.</title>
        <authorList>
            <person name="Chen S.L."/>
            <person name="Hung C.-S."/>
            <person name="Xu J."/>
            <person name="Reigstad C.S."/>
            <person name="Magrini V."/>
            <person name="Sabo A."/>
            <person name="Blasiar D."/>
            <person name="Bieri T."/>
            <person name="Meyer R.R."/>
            <person name="Ozersky P."/>
            <person name="Armstrong J.R."/>
            <person name="Fulton R.S."/>
            <person name="Latreille J.P."/>
            <person name="Spieth J."/>
            <person name="Hooton T.M."/>
            <person name="Mardis E.R."/>
            <person name="Hultgren S.J."/>
            <person name="Gordon J.I."/>
        </authorList>
    </citation>
    <scope>NUCLEOTIDE SEQUENCE [LARGE SCALE GENOMIC DNA]</scope>
    <source>
        <strain>UTI89 / UPEC</strain>
    </source>
</reference>
<name>LPTD_ECOUT</name>
<accession>Q1RGE3</accession>
<sequence length="784" mass="89625">MKKRIPTLLATMIATALYSQQGLAADLASQCMLGVPSYDRPLVQGDTNDLPVTINADHAKGDYPDDAVFTGSVDIMQGNSRLQADEVQLHQKEAPGQPEPVRTVDALGNVHYDDNQVILKGPKGWANLNTKDTNVWEGDYQMVGRQGRGKADLMKQRGENRYTILDNGSFTSCLPGSDTWSVVGSEIIHDREEQVAEIWNARFKVGPVPIFYSPYLQLPVGDKRRSGFLIPNAKYTTTNYFEFYLPYYWNIAPNMDATITPHYMHRRGNIMWENEFRYLSQAGAGLMELDYLPSDKVYKDEHPNDDSSRRWLFYWNHSGVMDQVWRFNVDYTKVSDPSYFNDFDNKYGSSTDGYATQKFSVGYAVQNFNATVSTKQFQVFSEQNTSSYSAEPQLDVNYYQNDVGPFDTRIYGQAVHFVNTRDDMPEATRVHLEPTINLPLSNNWGSINTEAKLLATHYQQTNLDWYNSRNTTKLAESANRVMPQFKVDGRMVFERDMEMLAPGYTQTLEPRAQYLYVPYRDQSKIYNYDSSLLQSDYSGLFRDRTYGGLDRIASANQVTTGVTSRIYDDAAVERFNISVGQIYYFTESRTGDDNITWENDDKTGSLVWAGDTYWRISDRWGLRGGIQYDTRLDNVATSNSSIEYRRDEDRLVQLNYRYASPEYIQATLPKYYSTAEQYKNGISQVGAVASWPIADRWSIVGAYYYDTNANKQADSMLGVQYSSCCYAIRVGYERKLNGWDNDKQHAVYDNAIGFNIELRGLSSNYGLGTQEMLRSNILPYQNTL</sequence>
<comment type="function">
    <text evidence="1">Together with LptE, is involved in the assembly of lipopolysaccharide (LPS) at the surface of the outer membrane.</text>
</comment>
<comment type="subunit">
    <text evidence="1">Component of the lipopolysaccharide transport and assembly complex. Interacts with LptE and LptA.</text>
</comment>
<comment type="subcellular location">
    <subcellularLocation>
        <location evidence="1">Cell outer membrane</location>
    </subcellularLocation>
</comment>
<comment type="PTM">
    <text evidence="1">Contains two intramolecular disulfide bonds.</text>
</comment>
<comment type="similarity">
    <text evidence="1">Belongs to the LptD family.</text>
</comment>
<keyword id="KW-0998">Cell outer membrane</keyword>
<keyword id="KW-1015">Disulfide bond</keyword>
<keyword id="KW-0472">Membrane</keyword>
<keyword id="KW-0732">Signal</keyword>
<proteinExistence type="inferred from homology"/>
<organism>
    <name type="scientific">Escherichia coli (strain UTI89 / UPEC)</name>
    <dbReference type="NCBI Taxonomy" id="364106"/>
    <lineage>
        <taxon>Bacteria</taxon>
        <taxon>Pseudomonadati</taxon>
        <taxon>Pseudomonadota</taxon>
        <taxon>Gammaproteobacteria</taxon>
        <taxon>Enterobacterales</taxon>
        <taxon>Enterobacteriaceae</taxon>
        <taxon>Escherichia</taxon>
    </lineage>
</organism>
<evidence type="ECO:0000255" key="1">
    <source>
        <dbReference type="HAMAP-Rule" id="MF_01411"/>
    </source>
</evidence>